<gene>
    <name type="primary">PGRP-LB</name>
    <name type="ORF">CG14704</name>
</gene>
<name>PGPLB_DROME</name>
<dbReference type="EC" id="3.5.1.28"/>
<dbReference type="EMBL" id="AF207537">
    <property type="protein sequence ID" value="AAG23731.1"/>
    <property type="molecule type" value="mRNA"/>
</dbReference>
<dbReference type="EMBL" id="AF207538">
    <property type="protein sequence ID" value="AAG23732.1"/>
    <property type="molecule type" value="mRNA"/>
</dbReference>
<dbReference type="EMBL" id="AE014297">
    <property type="protein sequence ID" value="AAF54643.1"/>
    <property type="molecule type" value="Genomic_DNA"/>
</dbReference>
<dbReference type="EMBL" id="AE014297">
    <property type="protein sequence ID" value="AAN13505.1"/>
    <property type="molecule type" value="Genomic_DNA"/>
</dbReference>
<dbReference type="EMBL" id="AY060759">
    <property type="protein sequence ID" value="AAL28307.1"/>
    <property type="molecule type" value="mRNA"/>
</dbReference>
<dbReference type="EMBL" id="BT011455">
    <property type="protein sequence ID" value="AAR99113.1"/>
    <property type="molecule type" value="mRNA"/>
</dbReference>
<dbReference type="RefSeq" id="NP_001247053.1">
    <molecule id="Q8INK6-2"/>
    <property type="nucleotide sequence ID" value="NM_001260124.2"/>
</dbReference>
<dbReference type="RefSeq" id="NP_001247054.1">
    <molecule id="Q8INK6-2"/>
    <property type="nucleotide sequence ID" value="NM_001260125.2"/>
</dbReference>
<dbReference type="RefSeq" id="NP_650079.1">
    <molecule id="Q8INK6-2"/>
    <property type="nucleotide sequence ID" value="NM_141822.3"/>
</dbReference>
<dbReference type="RefSeq" id="NP_731575.1">
    <molecule id="Q8INK6-1"/>
    <property type="nucleotide sequence ID" value="NM_169392.2"/>
</dbReference>
<dbReference type="RefSeq" id="NP_731576.1">
    <molecule id="Q8INK6-2"/>
    <property type="nucleotide sequence ID" value="NM_169393.3"/>
</dbReference>
<dbReference type="PDB" id="1OHT">
    <property type="method" value="X-ray"/>
    <property type="resolution" value="2.00 A"/>
    <property type="chains" value="A=18-232"/>
</dbReference>
<dbReference type="PDB" id="7NSX">
    <property type="method" value="X-ray"/>
    <property type="resolution" value="1.90 A"/>
    <property type="chains" value="AAA=18-232"/>
</dbReference>
<dbReference type="PDB" id="7NSY">
    <property type="method" value="X-ray"/>
    <property type="resolution" value="1.40 A"/>
    <property type="chains" value="AAA/BBB=18-232"/>
</dbReference>
<dbReference type="PDB" id="7NSZ">
    <property type="method" value="X-ray"/>
    <property type="resolution" value="1.30 A"/>
    <property type="chains" value="AAA=18-232"/>
</dbReference>
<dbReference type="PDB" id="7NT0">
    <property type="method" value="X-ray"/>
    <property type="resolution" value="1.80 A"/>
    <property type="chains" value="AAA/BBB=18-232"/>
</dbReference>
<dbReference type="PDBsum" id="1OHT"/>
<dbReference type="PDBsum" id="7NSX"/>
<dbReference type="PDBsum" id="7NSY"/>
<dbReference type="PDBsum" id="7NSZ"/>
<dbReference type="PDBsum" id="7NT0"/>
<dbReference type="SMR" id="Q8INK6"/>
<dbReference type="BioGRID" id="66511">
    <property type="interactions" value="7"/>
</dbReference>
<dbReference type="FunCoup" id="Q8INK6">
    <property type="interactions" value="84"/>
</dbReference>
<dbReference type="IntAct" id="Q8INK6">
    <property type="interactions" value="3"/>
</dbReference>
<dbReference type="STRING" id="7227.FBpp0297234"/>
<dbReference type="GlyCosmos" id="Q8INK6">
    <property type="glycosylation" value="1 site, No reported glycans"/>
</dbReference>
<dbReference type="GlyGen" id="Q8INK6">
    <property type="glycosylation" value="1 site"/>
</dbReference>
<dbReference type="PaxDb" id="7227-FBpp0297234"/>
<dbReference type="DNASU" id="41379"/>
<dbReference type="EnsemblMetazoa" id="FBtr0082396">
    <molecule id="Q8INK6-1"/>
    <property type="protein sequence ID" value="FBpp0081872"/>
    <property type="gene ID" value="FBgn0037906"/>
</dbReference>
<dbReference type="EnsemblMetazoa" id="FBtr0082397">
    <molecule id="Q8INK6-2"/>
    <property type="protein sequence ID" value="FBpp0081873"/>
    <property type="gene ID" value="FBgn0037906"/>
</dbReference>
<dbReference type="EnsemblMetazoa" id="FBtr0082398">
    <molecule id="Q8INK6-2"/>
    <property type="protein sequence ID" value="FBpp0081874"/>
    <property type="gene ID" value="FBgn0037906"/>
</dbReference>
<dbReference type="EnsemblMetazoa" id="FBtr0306098">
    <molecule id="Q8INK6-2"/>
    <property type="protein sequence ID" value="FBpp0297235"/>
    <property type="gene ID" value="FBgn0037906"/>
</dbReference>
<dbReference type="EnsemblMetazoa" id="FBtr0306099">
    <molecule id="Q8INK6-2"/>
    <property type="protein sequence ID" value="FBpp0297236"/>
    <property type="gene ID" value="FBgn0037906"/>
</dbReference>
<dbReference type="GeneID" id="41379"/>
<dbReference type="KEGG" id="dme:Dmel_CG14704"/>
<dbReference type="AGR" id="FB:FBgn0037906"/>
<dbReference type="CTD" id="41379"/>
<dbReference type="FlyBase" id="FBgn0037906">
    <property type="gene designation" value="PGRP-LB"/>
</dbReference>
<dbReference type="VEuPathDB" id="VectorBase:FBgn0037906"/>
<dbReference type="eggNOG" id="ENOG502QR3D">
    <property type="taxonomic scope" value="Eukaryota"/>
</dbReference>
<dbReference type="InParanoid" id="Q8INK6"/>
<dbReference type="OMA" id="TPECMKS"/>
<dbReference type="OrthoDB" id="10001926at2759"/>
<dbReference type="PhylomeDB" id="Q8INK6"/>
<dbReference type="BioGRID-ORCS" id="41379">
    <property type="hits" value="0 hits in 3 CRISPR screens"/>
</dbReference>
<dbReference type="EvolutionaryTrace" id="Q8INK6"/>
<dbReference type="GenomeRNAi" id="41379"/>
<dbReference type="PRO" id="PR:Q8INK6"/>
<dbReference type="Proteomes" id="UP000000803">
    <property type="component" value="Chromosome 3R"/>
</dbReference>
<dbReference type="Bgee" id="FBgn0037906">
    <property type="expression patterns" value="Expressed in adult oenocyte (Drosophila) in dorsal vessel heart and 101 other cell types or tissues"/>
</dbReference>
<dbReference type="ExpressionAtlas" id="Q8INK6">
    <property type="expression patterns" value="baseline and differential"/>
</dbReference>
<dbReference type="GO" id="GO:0005576">
    <property type="term" value="C:extracellular region"/>
    <property type="evidence" value="ECO:0000314"/>
    <property type="project" value="UniProtKB"/>
</dbReference>
<dbReference type="GO" id="GO:0008745">
    <property type="term" value="F:N-acetylmuramoyl-L-alanine amidase activity"/>
    <property type="evidence" value="ECO:0000314"/>
    <property type="project" value="FlyBase"/>
</dbReference>
<dbReference type="GO" id="GO:0042834">
    <property type="term" value="F:peptidoglycan binding"/>
    <property type="evidence" value="ECO:0007669"/>
    <property type="project" value="InterPro"/>
</dbReference>
<dbReference type="GO" id="GO:0008270">
    <property type="term" value="F:zinc ion binding"/>
    <property type="evidence" value="ECO:0007669"/>
    <property type="project" value="InterPro"/>
</dbReference>
<dbReference type="GO" id="GO:0050830">
    <property type="term" value="P:defense response to Gram-positive bacterium"/>
    <property type="evidence" value="ECO:0000314"/>
    <property type="project" value="UniProtKB"/>
</dbReference>
<dbReference type="GO" id="GO:0045087">
    <property type="term" value="P:innate immune response"/>
    <property type="evidence" value="ECO:0000303"/>
    <property type="project" value="UniProtKB"/>
</dbReference>
<dbReference type="GO" id="GO:0002814">
    <property type="term" value="P:negative regulation of biosynthetic process of antibacterial peptides active against Gram-negative bacteria"/>
    <property type="evidence" value="ECO:0000315"/>
    <property type="project" value="FlyBase"/>
</dbReference>
<dbReference type="GO" id="GO:0061060">
    <property type="term" value="P:negative regulation of peptidoglycan recognition protein signaling pathway"/>
    <property type="evidence" value="ECO:0000314"/>
    <property type="project" value="FlyBase"/>
</dbReference>
<dbReference type="GO" id="GO:0009253">
    <property type="term" value="P:peptidoglycan catabolic process"/>
    <property type="evidence" value="ECO:0000314"/>
    <property type="project" value="FlyBase"/>
</dbReference>
<dbReference type="CDD" id="cd06583">
    <property type="entry name" value="PGRP"/>
    <property type="match status" value="1"/>
</dbReference>
<dbReference type="FunFam" id="3.40.80.10:FF:000001">
    <property type="entry name" value="Peptidoglycan recognition protein 1"/>
    <property type="match status" value="1"/>
</dbReference>
<dbReference type="Gene3D" id="3.40.80.10">
    <property type="entry name" value="Peptidoglycan recognition protein-like"/>
    <property type="match status" value="1"/>
</dbReference>
<dbReference type="InterPro" id="IPR036505">
    <property type="entry name" value="Amidase/PGRP_sf"/>
</dbReference>
<dbReference type="InterPro" id="IPR002502">
    <property type="entry name" value="Amidase_domain"/>
</dbReference>
<dbReference type="InterPro" id="IPR017331">
    <property type="entry name" value="Peptidoglycan_recognition"/>
</dbReference>
<dbReference type="InterPro" id="IPR015510">
    <property type="entry name" value="PGRP"/>
</dbReference>
<dbReference type="InterPro" id="IPR006619">
    <property type="entry name" value="PGRP_domain_met/bac"/>
</dbReference>
<dbReference type="PANTHER" id="PTHR11022">
    <property type="entry name" value="PEPTIDOGLYCAN RECOGNITION PROTEIN"/>
    <property type="match status" value="1"/>
</dbReference>
<dbReference type="PANTHER" id="PTHR11022:SF77">
    <property type="entry name" value="PEPTIDOGLYCAN-RECOGNITION PROTEIN LB"/>
    <property type="match status" value="1"/>
</dbReference>
<dbReference type="Pfam" id="PF01510">
    <property type="entry name" value="Amidase_2"/>
    <property type="match status" value="1"/>
</dbReference>
<dbReference type="PIRSF" id="PIRSF037945">
    <property type="entry name" value="PGRPs"/>
    <property type="match status" value="1"/>
</dbReference>
<dbReference type="SMART" id="SM00644">
    <property type="entry name" value="Ami_2"/>
    <property type="match status" value="1"/>
</dbReference>
<dbReference type="SMART" id="SM00701">
    <property type="entry name" value="PGRP"/>
    <property type="match status" value="1"/>
</dbReference>
<dbReference type="SUPFAM" id="SSF55846">
    <property type="entry name" value="N-acetylmuramoyl-L-alanine amidase-like"/>
    <property type="match status" value="1"/>
</dbReference>
<evidence type="ECO:0000255" key="1"/>
<evidence type="ECO:0000256" key="2">
    <source>
        <dbReference type="SAM" id="MobiDB-lite"/>
    </source>
</evidence>
<evidence type="ECO:0000269" key="3">
    <source>
    </source>
</evidence>
<evidence type="ECO:0000269" key="4">
    <source>
    </source>
</evidence>
<evidence type="ECO:0000269" key="5">
    <source>
    </source>
</evidence>
<evidence type="ECO:0000303" key="6">
    <source>
    </source>
</evidence>
<evidence type="ECO:0000303" key="7">
    <source>
    </source>
</evidence>
<evidence type="ECO:0000303" key="8">
    <source>
    </source>
</evidence>
<evidence type="ECO:0000305" key="9"/>
<evidence type="ECO:0007744" key="10">
    <source>
        <dbReference type="PDB" id="1OHT"/>
    </source>
</evidence>
<evidence type="ECO:0007829" key="11">
    <source>
        <dbReference type="PDB" id="1OHT"/>
    </source>
</evidence>
<accession>Q8INK6</accession>
<accession>Q9VGN3</accession>
<organism>
    <name type="scientific">Drosophila melanogaster</name>
    <name type="common">Fruit fly</name>
    <dbReference type="NCBI Taxonomy" id="7227"/>
    <lineage>
        <taxon>Eukaryota</taxon>
        <taxon>Metazoa</taxon>
        <taxon>Ecdysozoa</taxon>
        <taxon>Arthropoda</taxon>
        <taxon>Hexapoda</taxon>
        <taxon>Insecta</taxon>
        <taxon>Pterygota</taxon>
        <taxon>Neoptera</taxon>
        <taxon>Endopterygota</taxon>
        <taxon>Diptera</taxon>
        <taxon>Brachycera</taxon>
        <taxon>Muscomorpha</taxon>
        <taxon>Ephydroidea</taxon>
        <taxon>Drosophilidae</taxon>
        <taxon>Drosophila</taxon>
        <taxon>Sophophora</taxon>
    </lineage>
</organism>
<reference key="1">
    <citation type="journal article" date="2000" name="Proc. Natl. Acad. Sci. U.S.A.">
        <title>A family of peptidoglycan recognition proteins in the fruit fly Drosophila melanogaster.</title>
        <authorList>
            <person name="Werner T."/>
            <person name="Liu G."/>
            <person name="Kang D."/>
            <person name="Ekengren S."/>
            <person name="Steiner H."/>
            <person name="Hultmark D."/>
        </authorList>
    </citation>
    <scope>NUCLEOTIDE SEQUENCE [MRNA] (ISOFORM A)</scope>
    <scope>TISSUE SPECIFICITY</scope>
    <scope>DEVELOPMENTAL STAGE</scope>
    <scope>INDUCTION</scope>
</reference>
<reference key="2">
    <citation type="journal article" date="2000" name="Science">
        <title>The genome sequence of Drosophila melanogaster.</title>
        <authorList>
            <person name="Adams M.D."/>
            <person name="Celniker S.E."/>
            <person name="Holt R.A."/>
            <person name="Evans C.A."/>
            <person name="Gocayne J.D."/>
            <person name="Amanatides P.G."/>
            <person name="Scherer S.E."/>
            <person name="Li P.W."/>
            <person name="Hoskins R.A."/>
            <person name="Galle R.F."/>
            <person name="George R.A."/>
            <person name="Lewis S.E."/>
            <person name="Richards S."/>
            <person name="Ashburner M."/>
            <person name="Henderson S.N."/>
            <person name="Sutton G.G."/>
            <person name="Wortman J.R."/>
            <person name="Yandell M.D."/>
            <person name="Zhang Q."/>
            <person name="Chen L.X."/>
            <person name="Brandon R.C."/>
            <person name="Rogers Y.-H.C."/>
            <person name="Blazej R.G."/>
            <person name="Champe M."/>
            <person name="Pfeiffer B.D."/>
            <person name="Wan K.H."/>
            <person name="Doyle C."/>
            <person name="Baxter E.G."/>
            <person name="Helt G."/>
            <person name="Nelson C.R."/>
            <person name="Miklos G.L.G."/>
            <person name="Abril J.F."/>
            <person name="Agbayani A."/>
            <person name="An H.-J."/>
            <person name="Andrews-Pfannkoch C."/>
            <person name="Baldwin D."/>
            <person name="Ballew R.M."/>
            <person name="Basu A."/>
            <person name="Baxendale J."/>
            <person name="Bayraktaroglu L."/>
            <person name="Beasley E.M."/>
            <person name="Beeson K.Y."/>
            <person name="Benos P.V."/>
            <person name="Berman B.P."/>
            <person name="Bhandari D."/>
            <person name="Bolshakov S."/>
            <person name="Borkova D."/>
            <person name="Botchan M.R."/>
            <person name="Bouck J."/>
            <person name="Brokstein P."/>
            <person name="Brottier P."/>
            <person name="Burtis K.C."/>
            <person name="Busam D.A."/>
            <person name="Butler H."/>
            <person name="Cadieu E."/>
            <person name="Center A."/>
            <person name="Chandra I."/>
            <person name="Cherry J.M."/>
            <person name="Cawley S."/>
            <person name="Dahlke C."/>
            <person name="Davenport L.B."/>
            <person name="Davies P."/>
            <person name="de Pablos B."/>
            <person name="Delcher A."/>
            <person name="Deng Z."/>
            <person name="Mays A.D."/>
            <person name="Dew I."/>
            <person name="Dietz S.M."/>
            <person name="Dodson K."/>
            <person name="Doup L.E."/>
            <person name="Downes M."/>
            <person name="Dugan-Rocha S."/>
            <person name="Dunkov B.C."/>
            <person name="Dunn P."/>
            <person name="Durbin K.J."/>
            <person name="Evangelista C.C."/>
            <person name="Ferraz C."/>
            <person name="Ferriera S."/>
            <person name="Fleischmann W."/>
            <person name="Fosler C."/>
            <person name="Gabrielian A.E."/>
            <person name="Garg N.S."/>
            <person name="Gelbart W.M."/>
            <person name="Glasser K."/>
            <person name="Glodek A."/>
            <person name="Gong F."/>
            <person name="Gorrell J.H."/>
            <person name="Gu Z."/>
            <person name="Guan P."/>
            <person name="Harris M."/>
            <person name="Harris N.L."/>
            <person name="Harvey D.A."/>
            <person name="Heiman T.J."/>
            <person name="Hernandez J.R."/>
            <person name="Houck J."/>
            <person name="Hostin D."/>
            <person name="Houston K.A."/>
            <person name="Howland T.J."/>
            <person name="Wei M.-H."/>
            <person name="Ibegwam C."/>
            <person name="Jalali M."/>
            <person name="Kalush F."/>
            <person name="Karpen G.H."/>
            <person name="Ke Z."/>
            <person name="Kennison J.A."/>
            <person name="Ketchum K.A."/>
            <person name="Kimmel B.E."/>
            <person name="Kodira C.D."/>
            <person name="Kraft C.L."/>
            <person name="Kravitz S."/>
            <person name="Kulp D."/>
            <person name="Lai Z."/>
            <person name="Lasko P."/>
            <person name="Lei Y."/>
            <person name="Levitsky A.A."/>
            <person name="Li J.H."/>
            <person name="Li Z."/>
            <person name="Liang Y."/>
            <person name="Lin X."/>
            <person name="Liu X."/>
            <person name="Mattei B."/>
            <person name="McIntosh T.C."/>
            <person name="McLeod M.P."/>
            <person name="McPherson D."/>
            <person name="Merkulov G."/>
            <person name="Milshina N.V."/>
            <person name="Mobarry C."/>
            <person name="Morris J."/>
            <person name="Moshrefi A."/>
            <person name="Mount S.M."/>
            <person name="Moy M."/>
            <person name="Murphy B."/>
            <person name="Murphy L."/>
            <person name="Muzny D.M."/>
            <person name="Nelson D.L."/>
            <person name="Nelson D.R."/>
            <person name="Nelson K.A."/>
            <person name="Nixon K."/>
            <person name="Nusskern D.R."/>
            <person name="Pacleb J.M."/>
            <person name="Palazzolo M."/>
            <person name="Pittman G.S."/>
            <person name="Pan S."/>
            <person name="Pollard J."/>
            <person name="Puri V."/>
            <person name="Reese M.G."/>
            <person name="Reinert K."/>
            <person name="Remington K."/>
            <person name="Saunders R.D.C."/>
            <person name="Scheeler F."/>
            <person name="Shen H."/>
            <person name="Shue B.C."/>
            <person name="Siden-Kiamos I."/>
            <person name="Simpson M."/>
            <person name="Skupski M.P."/>
            <person name="Smith T.J."/>
            <person name="Spier E."/>
            <person name="Spradling A.C."/>
            <person name="Stapleton M."/>
            <person name="Strong R."/>
            <person name="Sun E."/>
            <person name="Svirskas R."/>
            <person name="Tector C."/>
            <person name="Turner R."/>
            <person name="Venter E."/>
            <person name="Wang A.H."/>
            <person name="Wang X."/>
            <person name="Wang Z.-Y."/>
            <person name="Wassarman D.A."/>
            <person name="Weinstock G.M."/>
            <person name="Weissenbach J."/>
            <person name="Williams S.M."/>
            <person name="Woodage T."/>
            <person name="Worley K.C."/>
            <person name="Wu D."/>
            <person name="Yang S."/>
            <person name="Yao Q.A."/>
            <person name="Ye J."/>
            <person name="Yeh R.-F."/>
            <person name="Zaveri J.S."/>
            <person name="Zhan M."/>
            <person name="Zhang G."/>
            <person name="Zhao Q."/>
            <person name="Zheng L."/>
            <person name="Zheng X.H."/>
            <person name="Zhong F.N."/>
            <person name="Zhong W."/>
            <person name="Zhou X."/>
            <person name="Zhu S.C."/>
            <person name="Zhu X."/>
            <person name="Smith H.O."/>
            <person name="Gibbs R.A."/>
            <person name="Myers E.W."/>
            <person name="Rubin G.M."/>
            <person name="Venter J.C."/>
        </authorList>
    </citation>
    <scope>NUCLEOTIDE SEQUENCE [LARGE SCALE GENOMIC DNA]</scope>
    <source>
        <strain>Berkeley</strain>
    </source>
</reference>
<reference key="3">
    <citation type="journal article" date="2002" name="Genome Biol.">
        <title>Annotation of the Drosophila melanogaster euchromatic genome: a systematic review.</title>
        <authorList>
            <person name="Misra S."/>
            <person name="Crosby M.A."/>
            <person name="Mungall C.J."/>
            <person name="Matthews B.B."/>
            <person name="Campbell K.S."/>
            <person name="Hradecky P."/>
            <person name="Huang Y."/>
            <person name="Kaminker J.S."/>
            <person name="Millburn G.H."/>
            <person name="Prochnik S.E."/>
            <person name="Smith C.D."/>
            <person name="Tupy J.L."/>
            <person name="Whitfield E.J."/>
            <person name="Bayraktaroglu L."/>
            <person name="Berman B.P."/>
            <person name="Bettencourt B.R."/>
            <person name="Celniker S.E."/>
            <person name="de Grey A.D.N.J."/>
            <person name="Drysdale R.A."/>
            <person name="Harris N.L."/>
            <person name="Richter J."/>
            <person name="Russo S."/>
            <person name="Schroeder A.J."/>
            <person name="Shu S.Q."/>
            <person name="Stapleton M."/>
            <person name="Yamada C."/>
            <person name="Ashburner M."/>
            <person name="Gelbart W.M."/>
            <person name="Rubin G.M."/>
            <person name="Lewis S.E."/>
        </authorList>
    </citation>
    <scope>GENOME REANNOTATION</scope>
    <scope>ALTERNATIVE SPLICING</scope>
    <source>
        <strain>Berkeley</strain>
    </source>
</reference>
<reference key="4">
    <citation type="journal article" date="2002" name="Genome Biol.">
        <title>A Drosophila full-length cDNA resource.</title>
        <authorList>
            <person name="Stapleton M."/>
            <person name="Carlson J.W."/>
            <person name="Brokstein P."/>
            <person name="Yu C."/>
            <person name="Champe M."/>
            <person name="George R.A."/>
            <person name="Guarin H."/>
            <person name="Kronmiller B."/>
            <person name="Pacleb J.M."/>
            <person name="Park S."/>
            <person name="Wan K.H."/>
            <person name="Rubin G.M."/>
            <person name="Celniker S.E."/>
        </authorList>
    </citation>
    <scope>NUCLEOTIDE SEQUENCE [LARGE SCALE MRNA] (ISOFORM A)</scope>
    <source>
        <strain>Berkeley</strain>
        <tissue>Embryo</tissue>
    </source>
</reference>
<reference key="5">
    <citation type="submission" date="2004-01" db="EMBL/GenBank/DDBJ databases">
        <authorList>
            <person name="Stapleton M."/>
            <person name="Carlson J.W."/>
            <person name="Chavez C."/>
            <person name="Frise E."/>
            <person name="George R.A."/>
            <person name="Pacleb J.M."/>
            <person name="Park S."/>
            <person name="Wan K.H."/>
            <person name="Yu C."/>
            <person name="Rubin G.M."/>
            <person name="Celniker S.E."/>
        </authorList>
    </citation>
    <scope>NUCLEOTIDE SEQUENCE [LARGE SCALE MRNA] (ISOFORM C)</scope>
    <source>
        <strain>Berkeley</strain>
        <tissue>Embryo</tissue>
    </source>
</reference>
<reference key="6">
    <citation type="journal article" date="2002" name="EMBO J.">
        <title>The Toll and Imd pathways are the major regulators of the immune response in Drosophila.</title>
        <authorList>
            <person name="De Gregorio E."/>
            <person name="Spellman P.T."/>
            <person name="Tzou P."/>
            <person name="Rubin G.M."/>
            <person name="Lemaitre B."/>
        </authorList>
    </citation>
    <scope>INDUCTION</scope>
</reference>
<reference key="7">
    <citation type="journal article" date="2003" name="Nat. Immunol.">
        <title>Crystal structure of peptidoglycan recognition protein LB from Drosophila melanogaster.</title>
        <authorList>
            <person name="Kim M.-S."/>
            <person name="Byun M."/>
            <person name="Oh B.-H."/>
        </authorList>
    </citation>
    <scope>X-RAY CRYSTALLOGRAPHY (2.0 ANGSTROMS) OF 1-215 (ISOFORM A) IN COMPLEX WITH ZINC</scope>
    <scope>FUNCTION</scope>
    <scope>SUBUNIT</scope>
    <scope>DISULFIDE BOND</scope>
    <scope>MUTAGENESIS OF THR-175</scope>
</reference>
<proteinExistence type="evidence at protein level"/>
<protein>
    <recommendedName>
        <fullName>Peptidoglycan-recognition protein LB</fullName>
        <ecNumber>3.5.1.28</ecNumber>
    </recommendedName>
</protein>
<comment type="function">
    <text evidence="5">N-acetylmuramyl-L-alanine amidase involved in innate immunity by degrading bacterial peptidoglycans (PGN). Probably plays a scavenger role by digesting biologically active PGN into biologically inactive fragments. Has no direct bacteriolytic activity.</text>
</comment>
<comment type="catalytic activity">
    <reaction>
        <text>Hydrolyzes the link between N-acetylmuramoyl residues and L-amino acid residues in certain cell-wall glycopeptides.</text>
        <dbReference type="EC" id="3.5.1.28"/>
    </reaction>
</comment>
<comment type="cofactor">
    <cofactor evidence="5">
        <name>Zn(2+)</name>
        <dbReference type="ChEBI" id="CHEBI:29105"/>
    </cofactor>
    <text evidence="5">Binds 1 zinc ion per subunit.</text>
</comment>
<comment type="subunit">
    <text evidence="5">Monomer.</text>
</comment>
<comment type="subcellular location">
    <molecule>Isoform C</molecule>
    <subcellularLocation>
        <location evidence="9">Secreted</location>
    </subcellularLocation>
</comment>
<comment type="alternative products">
    <event type="alternative splicing"/>
    <isoform>
        <id>Q8INK6-1</id>
        <name>C</name>
        <sequence type="displayed"/>
    </isoform>
    <isoform>
        <id>Q8INK6-2</id>
        <name>A</name>
        <name>B</name>
        <sequence type="described" ref="VSP_013593"/>
    </isoform>
</comment>
<comment type="tissue specificity">
    <text evidence="3">Widely expressed.</text>
</comment>
<comment type="developmental stage">
    <text evidence="3">Expressed from old embryos. Expressed in larvae and adults.</text>
</comment>
<comment type="induction">
    <text evidence="3 4">Strongly up-regulated by PGN from B.subtilis. Regulated by the imd/Relish pathway.</text>
</comment>
<comment type="miscellaneous">
    <molecule>Isoform A</molecule>
    <text evidence="9">Does not contain a signal sequence.</text>
</comment>
<comment type="similarity">
    <text evidence="9">Belongs to the N-acetylmuramoyl-L-alanine amidase 2 family.</text>
</comment>
<feature type="signal peptide" evidence="1">
    <location>
        <begin position="1"/>
        <end position="15"/>
    </location>
</feature>
<feature type="chain" id="PRO_0000023905" description="Peptidoglycan-recognition protein LB">
    <location>
        <begin position="16"/>
        <end position="232"/>
    </location>
</feature>
<feature type="domain" description="N-acetylmuramoyl-L-alanine amidase" evidence="1">
    <location>
        <begin position="53"/>
        <end position="179"/>
    </location>
</feature>
<feature type="region of interest" description="Disordered" evidence="2">
    <location>
        <begin position="213"/>
        <end position="232"/>
    </location>
</feature>
<feature type="binding site" evidence="5 10">
    <location>
        <position position="59"/>
    </location>
    <ligand>
        <name>Zn(2+)</name>
        <dbReference type="ChEBI" id="CHEBI:29105"/>
    </ligand>
</feature>
<feature type="binding site" evidence="5 10">
    <location>
        <position position="169"/>
    </location>
    <ligand>
        <name>Zn(2+)</name>
        <dbReference type="ChEBI" id="CHEBI:29105"/>
    </ligand>
</feature>
<feature type="binding site" evidence="5 10">
    <location>
        <position position="177"/>
    </location>
    <ligand>
        <name>Zn(2+)</name>
        <dbReference type="ChEBI" id="CHEBI:29105"/>
    </ligand>
</feature>
<feature type="site" description="Essential for zinc hydrate coordination" evidence="8">
    <location>
        <position position="95"/>
    </location>
</feature>
<feature type="glycosylation site" description="N-linked (GlcNAc...) asparagine" evidence="1">
    <location>
        <position position="196"/>
    </location>
</feature>
<feature type="disulfide bond" evidence="5">
    <location>
        <begin position="67"/>
        <end position="73"/>
    </location>
</feature>
<feature type="splice variant" id="VSP_013593" description="In isoform A." evidence="6 7">
    <location>
        <begin position="1"/>
        <end position="17"/>
    </location>
</feature>
<feature type="mutagenesis site" description="Loss of function." evidence="5">
    <original>T</original>
    <variation>K</variation>
    <location>
        <position position="175"/>
    </location>
</feature>
<feature type="helix" evidence="11">
    <location>
        <begin position="36"/>
        <end position="38"/>
    </location>
</feature>
<feature type="strand" evidence="11">
    <location>
        <begin position="51"/>
        <end position="60"/>
    </location>
</feature>
<feature type="strand" evidence="11">
    <location>
        <begin position="62"/>
        <end position="64"/>
    </location>
</feature>
<feature type="helix" evidence="11">
    <location>
        <begin position="70"/>
        <end position="86"/>
    </location>
</feature>
<feature type="strand" evidence="11">
    <location>
        <begin position="94"/>
        <end position="99"/>
    </location>
</feature>
<feature type="strand" evidence="11">
    <location>
        <begin position="105"/>
        <end position="109"/>
    </location>
</feature>
<feature type="strand" evidence="11">
    <location>
        <begin position="116"/>
        <end position="118"/>
    </location>
</feature>
<feature type="turn" evidence="11">
    <location>
        <begin position="119"/>
        <end position="123"/>
    </location>
</feature>
<feature type="strand" evidence="11">
    <location>
        <begin position="124"/>
        <end position="132"/>
    </location>
</feature>
<feature type="strand" evidence="11">
    <location>
        <begin position="135"/>
        <end position="137"/>
    </location>
</feature>
<feature type="helix" evidence="11">
    <location>
        <begin position="141"/>
        <end position="156"/>
    </location>
</feature>
<feature type="strand" evidence="11">
    <location>
        <begin position="159"/>
        <end position="168"/>
    </location>
</feature>
<feature type="helix" evidence="11">
    <location>
        <begin position="169"/>
        <end position="171"/>
    </location>
</feature>
<feature type="strand" evidence="11">
    <location>
        <begin position="173"/>
        <end position="175"/>
    </location>
</feature>
<feature type="helix" evidence="11">
    <location>
        <begin position="180"/>
        <end position="186"/>
    </location>
</feature>
<feature type="helix" evidence="11">
    <location>
        <begin position="195"/>
        <end position="197"/>
    </location>
</feature>
<keyword id="KW-0002">3D-structure</keyword>
<keyword id="KW-0025">Alternative splicing</keyword>
<keyword id="KW-1015">Disulfide bond</keyword>
<keyword id="KW-0325">Glycoprotein</keyword>
<keyword id="KW-0378">Hydrolase</keyword>
<keyword id="KW-0391">Immunity</keyword>
<keyword id="KW-0399">Innate immunity</keyword>
<keyword id="KW-0479">Metal-binding</keyword>
<keyword id="KW-1185">Reference proteome</keyword>
<keyword id="KW-0964">Secreted</keyword>
<keyword id="KW-0732">Signal</keyword>
<keyword id="KW-0862">Zinc</keyword>
<sequence length="232" mass="25436">MTALGLVLLSMMGYSQHMQQANLGDGVATARLLSRSDWGARLPKSVEHFQGPAPYVIIHHSYMPAVCYSTPDCMKSMRDMQDFHQLERGWNDIGYSFGIGGDGMIYTGRGFNVIGAHAPKYNDKSVGIVLIGDWRTELPPKQMLDAAKNLIAFGVFKGYIDPAYKLLGHRQVRDTECPGGRLFAEISSWPHFTHINDTEGVSSTTAPVVPHVHPQAAAPQKPHQSPPAAPKV</sequence>